<protein>
    <recommendedName>
        <fullName evidence="3">Anaerobic nitrite reductase</fullName>
        <ecNumber evidence="3">1.7.2.-</ecNumber>
    </recommendedName>
    <alternativeName>
        <fullName evidence="9">Nonsymbiotic hemoglobin</fullName>
        <shortName evidence="9">ParaHb</shortName>
    </alternativeName>
</protein>
<proteinExistence type="evidence at protein level"/>
<keyword id="KW-0002">3D-structure</keyword>
<keyword id="KW-0007">Acetylation</keyword>
<keyword id="KW-0963">Cytoplasm</keyword>
<keyword id="KW-0903">Direct protein sequencing</keyword>
<keyword id="KW-0349">Heme</keyword>
<keyword id="KW-0408">Iron</keyword>
<keyword id="KW-0479">Metal-binding</keyword>
<keyword id="KW-0535">Nitrogen fixation</keyword>
<keyword id="KW-0539">Nucleus</keyword>
<keyword id="KW-0560">Oxidoreductase</keyword>
<keyword id="KW-0561">Oxygen transport</keyword>
<keyword id="KW-0813">Transport</keyword>
<gene>
    <name evidence="9" type="primary">HB</name>
</gene>
<sequence length="162" mass="18150">MSSSEVNKVFTEEQEALVVKAWAVMKKNSAELGLQFFLKIFEIAPSAKNLFSYLKDSPVPLEQNPKLKPHATTVFVMTCESAVQLRKAGKATVKESDLKRIGAIHFKTGVVNEHFEVTRFALLETIKEAVPEMWSPEMKNAWGVAYDQLVAAIKFEMKPSST</sequence>
<accession>P68168</accession>
<accession>P04396</accession>
<dbReference type="EC" id="1.7.2.-" evidence="3"/>
<dbReference type="EMBL" id="U27194">
    <property type="protein sequence ID" value="AAB86653.1"/>
    <property type="molecule type" value="Genomic_DNA"/>
</dbReference>
<dbReference type="PIR" id="S05541">
    <property type="entry name" value="GPDRNL"/>
</dbReference>
<dbReference type="PDB" id="3QQR">
    <property type="method" value="X-ray"/>
    <property type="resolution" value="2.16 A"/>
    <property type="chains" value="A/B=1-162"/>
</dbReference>
<dbReference type="PDBsum" id="3QQR"/>
<dbReference type="SMR" id="P68168"/>
<dbReference type="iPTMnet" id="P68168"/>
<dbReference type="EvolutionaryTrace" id="P68168"/>
<dbReference type="GO" id="GO:0005737">
    <property type="term" value="C:cytoplasm"/>
    <property type="evidence" value="ECO:0007669"/>
    <property type="project" value="UniProtKB-SubCell"/>
</dbReference>
<dbReference type="GO" id="GO:0005634">
    <property type="term" value="C:nucleus"/>
    <property type="evidence" value="ECO:0007669"/>
    <property type="project" value="UniProtKB-SubCell"/>
</dbReference>
<dbReference type="GO" id="GO:0020037">
    <property type="term" value="F:heme binding"/>
    <property type="evidence" value="ECO:0007669"/>
    <property type="project" value="InterPro"/>
</dbReference>
<dbReference type="GO" id="GO:0046872">
    <property type="term" value="F:metal ion binding"/>
    <property type="evidence" value="ECO:0007669"/>
    <property type="project" value="UniProtKB-KW"/>
</dbReference>
<dbReference type="GO" id="GO:0016491">
    <property type="term" value="F:oxidoreductase activity"/>
    <property type="evidence" value="ECO:0007669"/>
    <property type="project" value="UniProtKB-KW"/>
</dbReference>
<dbReference type="GO" id="GO:0019825">
    <property type="term" value="F:oxygen binding"/>
    <property type="evidence" value="ECO:0007669"/>
    <property type="project" value="InterPro"/>
</dbReference>
<dbReference type="GO" id="GO:0005344">
    <property type="term" value="F:oxygen carrier activity"/>
    <property type="evidence" value="ECO:0007669"/>
    <property type="project" value="UniProtKB-KW"/>
</dbReference>
<dbReference type="CDD" id="cd14784">
    <property type="entry name" value="class1_nsHb-like"/>
    <property type="match status" value="1"/>
</dbReference>
<dbReference type="Gene3D" id="1.10.490.10">
    <property type="entry name" value="Globins"/>
    <property type="match status" value="1"/>
</dbReference>
<dbReference type="InterPro" id="IPR000971">
    <property type="entry name" value="Globin"/>
</dbReference>
<dbReference type="InterPro" id="IPR009050">
    <property type="entry name" value="Globin-like_sf"/>
</dbReference>
<dbReference type="InterPro" id="IPR012292">
    <property type="entry name" value="Globin/Proto"/>
</dbReference>
<dbReference type="InterPro" id="IPR001032">
    <property type="entry name" value="Leghaemoglobin-like"/>
</dbReference>
<dbReference type="InterPro" id="IPR019824">
    <property type="entry name" value="Leghaemoglobin_Fe_BS"/>
</dbReference>
<dbReference type="PANTHER" id="PTHR22924">
    <property type="entry name" value="LEGHEMOGLOBIN-RELATED"/>
    <property type="match status" value="1"/>
</dbReference>
<dbReference type="PANTHER" id="PTHR22924:SF39">
    <property type="entry name" value="NON-SYMBIOTIC HEMOGLOBIN 1"/>
    <property type="match status" value="1"/>
</dbReference>
<dbReference type="Pfam" id="PF00042">
    <property type="entry name" value="Globin"/>
    <property type="match status" value="1"/>
</dbReference>
<dbReference type="PRINTS" id="PR00188">
    <property type="entry name" value="PLANTGLOBIN"/>
</dbReference>
<dbReference type="SUPFAM" id="SSF46458">
    <property type="entry name" value="Globin-like"/>
    <property type="match status" value="1"/>
</dbReference>
<dbReference type="PROSITE" id="PS01033">
    <property type="entry name" value="GLOBIN"/>
    <property type="match status" value="1"/>
</dbReference>
<dbReference type="PROSITE" id="PS00208">
    <property type="entry name" value="PLANT_GLOBIN"/>
    <property type="match status" value="1"/>
</dbReference>
<evidence type="ECO:0000250" key="1">
    <source>
        <dbReference type="UniProtKB" id="A2XE98"/>
    </source>
</evidence>
<evidence type="ECO:0000250" key="2">
    <source>
        <dbReference type="UniProtKB" id="I3SPW2"/>
    </source>
</evidence>
<evidence type="ECO:0000250" key="3">
    <source>
        <dbReference type="UniProtKB" id="O04986"/>
    </source>
</evidence>
<evidence type="ECO:0000250" key="4">
    <source>
        <dbReference type="UniProtKB" id="Q3C1F4"/>
    </source>
</evidence>
<evidence type="ECO:0000250" key="5">
    <source>
        <dbReference type="UniProtKB" id="Q42831"/>
    </source>
</evidence>
<evidence type="ECO:0000255" key="6">
    <source>
        <dbReference type="PROSITE-ProRule" id="PRU00238"/>
    </source>
</evidence>
<evidence type="ECO:0000269" key="7">
    <source>
    </source>
</evidence>
<evidence type="ECO:0000269" key="8">
    <source>
    </source>
</evidence>
<evidence type="ECO:0000303" key="9">
    <source>
    </source>
</evidence>
<evidence type="ECO:0000305" key="10"/>
<evidence type="ECO:0000305" key="11">
    <source>
    </source>
</evidence>
<evidence type="ECO:0007744" key="12">
    <source>
        <dbReference type="PDB" id="3QQR"/>
    </source>
</evidence>
<evidence type="ECO:0007829" key="13">
    <source>
        <dbReference type="PDB" id="3QQR"/>
    </source>
</evidence>
<reference key="1">
    <citation type="journal article" date="1986" name="Nature">
        <title>Common evolutionary origin of legume and non-legume plant haemoglobins.</title>
        <authorList>
            <person name="Landsmann J."/>
            <person name="Dennis E.S."/>
            <person name="Higgins T.J.V."/>
            <person name="Appleby C.A."/>
            <person name="Kortt A.A."/>
            <person name="Peacock W.J."/>
        </authorList>
    </citation>
    <scope>NUCLEOTIDE SEQUENCE [GENOMIC DNA]</scope>
</reference>
<reference key="2">
    <citation type="journal article" date="1985" name="FEBS Lett.">
        <title>The amino acid sequence of hemoglobin I from Parasponia andersonii, a nonleguminous plant.</title>
        <authorList>
            <person name="Kortt A.A."/>
            <person name="Burns J.E."/>
            <person name="Trinick M.J."/>
            <person name="Appleby C.A."/>
        </authorList>
    </citation>
    <scope>PROTEIN SEQUENCE OF 6-160</scope>
</reference>
<reference key="3">
    <citation type="journal article" date="1988" name="Eur. J. Biochem.">
        <title>Amino acid sequences of hemoglobins I and II from root nodules of the non-leguminous Parasponia rigida-rhizobium symbiosis, and a correction of the sequence of hemoglobin I from Parasponia andersonii.</title>
        <authorList>
            <person name="Kortt A.A."/>
            <person name="Trinick M.J."/>
            <person name="Appleby C.A."/>
        </authorList>
    </citation>
    <scope>PROTEIN SEQUENCE OF 28-40 AND 67-86</scope>
    <scope>ACETYLATION AT SER-2</scope>
    <scope>SEQUENCE REVISION</scope>
    <scope>POLYMORPHISM</scope>
    <scope>VARIANT ASP-31</scope>
    <scope>TISSUE SPECIFICITY</scope>
</reference>
<reference key="4">
    <citation type="journal article" date="2011" name="Biochemistry">
        <title>Crystal structures of Parasponia and Trema hemoglobins: differential heme coordination is linked to quaternary structure.</title>
        <authorList>
            <person name="Kakar S."/>
            <person name="Sturms R."/>
            <person name="Tiffany A."/>
            <person name="Nix J.C."/>
            <person name="DiSpirito A.A."/>
            <person name="Hargrove M.S."/>
        </authorList>
    </citation>
    <scope>X-RAY CRYSTALLOGRAPHY (2.16 ANGSTROMS) IN COMPLEX WITH HEME B</scope>
    <scope>MUTAGENESIS OF ILE-43</scope>
    <scope>HOMODIMER</scope>
    <scope>COFACTOR</scope>
</reference>
<comment type="function">
    <text evidence="2 3 4 5">Phytoglobin that reduces nitrite to nitric oxide (NO) under anoxic conditions (e.g. during flooding or in waterlogged soil) and upon root nodulation (By similarity). Required for general plant development and during nodulation, especially for the onset of symbiosis (By similarity). Monitors nitric oxide (NO) levels during early phase of the nitrogen-fixing symbiosis and buffers oxygen in functioning nodules (By similarity). May not function as an oxygen storage or transport protein (By similarity). Has an unusually high affinity for O(2) through a hexacoordinate heme iron because of a very low dissociation constant (By similarity).</text>
</comment>
<comment type="catalytic activity">
    <reaction evidence="3">
        <text>Fe(III)-heme b-[protein] + nitric oxide + H2O = Fe(II)-heme b-[protein] + nitrite + 2 H(+)</text>
        <dbReference type="Rhea" id="RHEA:77711"/>
        <dbReference type="Rhea" id="RHEA-COMP:18975"/>
        <dbReference type="Rhea" id="RHEA-COMP:18976"/>
        <dbReference type="ChEBI" id="CHEBI:15377"/>
        <dbReference type="ChEBI" id="CHEBI:15378"/>
        <dbReference type="ChEBI" id="CHEBI:16301"/>
        <dbReference type="ChEBI" id="CHEBI:16480"/>
        <dbReference type="ChEBI" id="CHEBI:55376"/>
        <dbReference type="ChEBI" id="CHEBI:60344"/>
    </reaction>
    <physiologicalReaction direction="right-to-left" evidence="3">
        <dbReference type="Rhea" id="RHEA:77713"/>
    </physiologicalReaction>
</comment>
<comment type="cofactor">
    <cofactor evidence="7">
        <name>heme b</name>
        <dbReference type="ChEBI" id="CHEBI:60344"/>
    </cofactor>
    <text evidence="7">Binds 1 heme group per subunit.</text>
</comment>
<comment type="subunit">
    <text evidence="7">Homodimer with distinct heme coordination in each subunits.</text>
</comment>
<comment type="subcellular location">
    <subcellularLocation>
        <location evidence="1">Cytoplasm</location>
    </subcellularLocation>
    <subcellularLocation>
        <location evidence="1">Nucleus</location>
    </subcellularLocation>
</comment>
<comment type="tissue specificity">
    <text evidence="11">Root nodules.</text>
</comment>
<comment type="polymorphism">
    <text evidence="8">Two variants of the protein, hemoglobin I and hemoglobin II seem to exist.</text>
</comment>
<comment type="similarity">
    <text evidence="10">Belongs to the plant globin family.</text>
</comment>
<feature type="initiator methionine" description="Removed">
    <location>
        <position position="1"/>
    </location>
</feature>
<feature type="chain" id="PRO_0000192981" description="Anaerobic nitrite reductase">
    <location>
        <begin position="2"/>
        <end position="162"/>
    </location>
</feature>
<feature type="domain" description="Globin" evidence="6">
    <location>
        <begin position="9"/>
        <end position="158"/>
    </location>
</feature>
<feature type="short sequence motif" description="Homodimerization" evidence="7 12">
    <location>
        <begin position="42"/>
        <end position="46"/>
    </location>
</feature>
<feature type="short sequence motif" description="Homodimerization" evidence="7 12">
    <location>
        <begin position="112"/>
        <end position="124"/>
    </location>
</feature>
<feature type="binding site" evidence="7 12">
    <location>
        <position position="52"/>
    </location>
    <ligand>
        <name>heme b</name>
        <dbReference type="ChEBI" id="CHEBI:60344"/>
    </ligand>
</feature>
<feature type="binding site" evidence="3">
    <location>
        <position position="66"/>
    </location>
    <ligand>
        <name>heme b</name>
        <dbReference type="ChEBI" id="CHEBI:60344"/>
    </ligand>
</feature>
<feature type="binding site" description="distal binding residue" evidence="6 7 12">
    <location>
        <position position="70"/>
    </location>
    <ligand>
        <name>heme b</name>
        <dbReference type="ChEBI" id="CHEBI:60344"/>
    </ligand>
    <ligandPart>
        <name>Fe</name>
        <dbReference type="ChEBI" id="CHEBI:18248"/>
    </ligandPart>
</feature>
<feature type="binding site" evidence="7 12">
    <location>
        <position position="100"/>
    </location>
    <ligand>
        <name>heme b</name>
        <dbReference type="ChEBI" id="CHEBI:60344"/>
    </ligand>
</feature>
<feature type="binding site" description="proximal binding residue" evidence="6 7 12">
    <location>
        <position position="105"/>
    </location>
    <ligand>
        <name>heme b</name>
        <dbReference type="ChEBI" id="CHEBI:60344"/>
    </ligand>
    <ligandPart>
        <name>Fe</name>
        <dbReference type="ChEBI" id="CHEBI:18248"/>
    </ligandPart>
</feature>
<feature type="site" description="Homodimerization" evidence="7 12">
    <location>
        <position position="139"/>
    </location>
</feature>
<feature type="modified residue" description="N-acetylserine" evidence="8">
    <location>
        <position position="2"/>
    </location>
</feature>
<feature type="sequence variant" description="In 30 percent hemoglobin I and in hemoglobin II." evidence="8">
    <original>E</original>
    <variation>D</variation>
    <location>
        <position position="31"/>
    </location>
</feature>
<feature type="mutagenesis site" description="Impaired dimerization leading to monomeric protein." evidence="7">
    <original>I</original>
    <variation>N</variation>
    <location>
        <position position="43"/>
    </location>
</feature>
<feature type="sequence conflict" description="In Ref. 1; AAB86653." evidence="10" ref="1">
    <original>A</original>
    <variation>V</variation>
    <location>
        <position position="91"/>
    </location>
</feature>
<feature type="helix" evidence="13">
    <location>
        <begin position="12"/>
        <end position="25"/>
    </location>
</feature>
<feature type="helix" evidence="13">
    <location>
        <begin position="26"/>
        <end position="28"/>
    </location>
</feature>
<feature type="helix" evidence="13">
    <location>
        <begin position="29"/>
        <end position="43"/>
    </location>
</feature>
<feature type="helix" evidence="13">
    <location>
        <begin position="45"/>
        <end position="50"/>
    </location>
</feature>
<feature type="helix" evidence="13">
    <location>
        <begin position="52"/>
        <end position="54"/>
    </location>
</feature>
<feature type="helix" evidence="13">
    <location>
        <begin position="67"/>
        <end position="88"/>
    </location>
</feature>
<feature type="helix" evidence="13">
    <location>
        <begin position="95"/>
        <end position="108"/>
    </location>
</feature>
<feature type="helix" evidence="13">
    <location>
        <begin position="112"/>
        <end position="129"/>
    </location>
</feature>
<feature type="turn" evidence="13">
    <location>
        <begin position="131"/>
        <end position="133"/>
    </location>
</feature>
<feature type="helix" evidence="13">
    <location>
        <begin position="136"/>
        <end position="154"/>
    </location>
</feature>
<organism>
    <name type="scientific">Parasponia andersonii</name>
    <name type="common">Sponia andersonii</name>
    <dbReference type="NCBI Taxonomy" id="3476"/>
    <lineage>
        <taxon>Eukaryota</taxon>
        <taxon>Viridiplantae</taxon>
        <taxon>Streptophyta</taxon>
        <taxon>Embryophyta</taxon>
        <taxon>Tracheophyta</taxon>
        <taxon>Spermatophyta</taxon>
        <taxon>Magnoliopsida</taxon>
        <taxon>eudicotyledons</taxon>
        <taxon>Gunneridae</taxon>
        <taxon>Pentapetalae</taxon>
        <taxon>rosids</taxon>
        <taxon>fabids</taxon>
        <taxon>Rosales</taxon>
        <taxon>Cannabaceae</taxon>
        <taxon>Parasponia</taxon>
    </lineage>
</organism>
<name>HBPL_PARAD</name>